<keyword id="KW-0007">Acetylation</keyword>
<keyword id="KW-0113">Calvin cycle</keyword>
<keyword id="KW-0120">Carbon dioxide fixation</keyword>
<keyword id="KW-0150">Chloroplast</keyword>
<keyword id="KW-0456">Lyase</keyword>
<keyword id="KW-0488">Methylation</keyword>
<keyword id="KW-0503">Monooxygenase</keyword>
<keyword id="KW-0560">Oxidoreductase</keyword>
<keyword id="KW-0601">Photorespiration</keyword>
<keyword id="KW-0602">Photosynthesis</keyword>
<keyword id="KW-0934">Plastid</keyword>
<accession>P31193</accession>
<gene>
    <name type="primary">rbcL</name>
</gene>
<organism>
    <name type="scientific">Magnolia liliiflora</name>
    <name type="common">Mulan magnolia</name>
    <name type="synonym">Yulania liliiflora</name>
    <dbReference type="NCBI Taxonomy" id="3403"/>
    <lineage>
        <taxon>Eukaryota</taxon>
        <taxon>Viridiplantae</taxon>
        <taxon>Streptophyta</taxon>
        <taxon>Embryophyta</taxon>
        <taxon>Tracheophyta</taxon>
        <taxon>Spermatophyta</taxon>
        <taxon>Magnoliopsida</taxon>
        <taxon>Magnoliidae</taxon>
        <taxon>Magnoliales</taxon>
        <taxon>Magnoliaceae</taxon>
        <taxon>Magnolia</taxon>
    </lineage>
</organism>
<geneLocation type="chloroplast"/>
<name>RBL_MAGLI</name>
<dbReference type="EC" id="4.1.1.39"/>
<dbReference type="EMBL" id="X69746">
    <property type="protein sequence ID" value="CAA49401.1"/>
    <property type="molecule type" value="Genomic_DNA"/>
</dbReference>
<dbReference type="PIR" id="S31533">
    <property type="entry name" value="S31533"/>
</dbReference>
<dbReference type="SMR" id="P31193"/>
<dbReference type="GO" id="GO:0009507">
    <property type="term" value="C:chloroplast"/>
    <property type="evidence" value="ECO:0007669"/>
    <property type="project" value="UniProtKB-SubCell"/>
</dbReference>
<dbReference type="GO" id="GO:0004497">
    <property type="term" value="F:monooxygenase activity"/>
    <property type="evidence" value="ECO:0007669"/>
    <property type="project" value="UniProtKB-KW"/>
</dbReference>
<dbReference type="GO" id="GO:0016984">
    <property type="term" value="F:ribulose-bisphosphate carboxylase activity"/>
    <property type="evidence" value="ECO:0007669"/>
    <property type="project" value="UniProtKB-EC"/>
</dbReference>
<dbReference type="GO" id="GO:0009853">
    <property type="term" value="P:photorespiration"/>
    <property type="evidence" value="ECO:0007669"/>
    <property type="project" value="UniProtKB-KW"/>
</dbReference>
<dbReference type="GO" id="GO:0019253">
    <property type="term" value="P:reductive pentose-phosphate cycle"/>
    <property type="evidence" value="ECO:0007669"/>
    <property type="project" value="UniProtKB-KW"/>
</dbReference>
<dbReference type="Gene3D" id="3.30.70.150">
    <property type="entry name" value="RuBisCO large subunit, N-terminal domain"/>
    <property type="match status" value="1"/>
</dbReference>
<dbReference type="InterPro" id="IPR033966">
    <property type="entry name" value="RuBisCO"/>
</dbReference>
<dbReference type="InterPro" id="IPR036422">
    <property type="entry name" value="RuBisCO_lsu_N_sf"/>
</dbReference>
<dbReference type="PANTHER" id="PTHR42704">
    <property type="entry name" value="RIBULOSE BISPHOSPHATE CARBOXYLASE"/>
    <property type="match status" value="1"/>
</dbReference>
<dbReference type="PANTHER" id="PTHR42704:SF16">
    <property type="entry name" value="RIBULOSE BISPHOSPHATE CARBOXYLASE LARGE CHAIN"/>
    <property type="match status" value="1"/>
</dbReference>
<dbReference type="SUPFAM" id="SSF54966">
    <property type="entry name" value="RuBisCO, large subunit, small (N-terminal) domain"/>
    <property type="match status" value="1"/>
</dbReference>
<feature type="propeptide" id="PRO_0000031289" evidence="1">
    <location>
        <begin position="1"/>
        <end position="2"/>
    </location>
</feature>
<feature type="chain" id="PRO_0000031290" description="Ribulose bisphosphate carboxylase large chain">
    <location>
        <begin position="3"/>
        <end position="54" status="greater than"/>
    </location>
</feature>
<feature type="modified residue" description="N-acetylproline" evidence="1">
    <location>
        <position position="3"/>
    </location>
</feature>
<feature type="modified residue" description="N6,N6,N6-trimethyllysine" evidence="1">
    <location>
        <position position="14"/>
    </location>
</feature>
<feature type="non-terminal residue">
    <location>
        <position position="54"/>
    </location>
</feature>
<reference key="1">
    <citation type="journal article" date="1994" name="Mol. Phylogenet. Evol.">
        <title>Molecular phylogeny of families related to Celastrales based on rbcL 5' flanking sequences.</title>
        <authorList>
            <person name="Savolainen V."/>
            <person name="Manen J.F."/>
            <person name="Douzery E.J.P."/>
            <person name="Spichiger R."/>
        </authorList>
    </citation>
    <scope>NUCLEOTIDE SEQUENCE [GENOMIC DNA]</scope>
    <source>
        <strain>Sample MLI1</strain>
    </source>
</reference>
<proteinExistence type="inferred from homology"/>
<sequence length="54" mass="5893">MSPKTETKASVGFKAGVKEYKLTYYTPEYETKDTDTLAALRVTPQPGVPPEEAG</sequence>
<evidence type="ECO:0000250" key="1"/>
<evidence type="ECO:0000305" key="2"/>
<protein>
    <recommendedName>
        <fullName>Ribulose bisphosphate carboxylase large chain</fullName>
        <shortName>RuBisCO large subunit</shortName>
        <ecNumber>4.1.1.39</ecNumber>
    </recommendedName>
</protein>
<comment type="function">
    <text evidence="1">RuBisCO catalyzes two reactions: the carboxylation of D-ribulose 1,5-bisphosphate, the primary event in carbon dioxide fixation, as well as the oxidative fragmentation of the pentose substrate in the photorespiration process. Both reactions occur simultaneously and in competition at the same active site (By similarity).</text>
</comment>
<comment type="catalytic activity">
    <reaction>
        <text>2 (2R)-3-phosphoglycerate + 2 H(+) = D-ribulose 1,5-bisphosphate + CO2 + H2O</text>
        <dbReference type="Rhea" id="RHEA:23124"/>
        <dbReference type="ChEBI" id="CHEBI:15377"/>
        <dbReference type="ChEBI" id="CHEBI:15378"/>
        <dbReference type="ChEBI" id="CHEBI:16526"/>
        <dbReference type="ChEBI" id="CHEBI:57870"/>
        <dbReference type="ChEBI" id="CHEBI:58272"/>
        <dbReference type="EC" id="4.1.1.39"/>
    </reaction>
</comment>
<comment type="catalytic activity">
    <reaction>
        <text>D-ribulose 1,5-bisphosphate + O2 = 2-phosphoglycolate + (2R)-3-phosphoglycerate + 2 H(+)</text>
        <dbReference type="Rhea" id="RHEA:36631"/>
        <dbReference type="ChEBI" id="CHEBI:15378"/>
        <dbReference type="ChEBI" id="CHEBI:15379"/>
        <dbReference type="ChEBI" id="CHEBI:57870"/>
        <dbReference type="ChEBI" id="CHEBI:58033"/>
        <dbReference type="ChEBI" id="CHEBI:58272"/>
    </reaction>
</comment>
<comment type="subunit">
    <text evidence="1">Heterohexadecamer of 8 large chains and 8 small chains.</text>
</comment>
<comment type="subcellular location">
    <subcellularLocation>
        <location>Plastid</location>
        <location>Chloroplast</location>
    </subcellularLocation>
</comment>
<comment type="miscellaneous">
    <text evidence="1">The basic functional RuBisCO is composed of a large chain homodimer in a 'head-to-tail' conformation. In form I RuBisCO this homodimer is arranged in a barrel-like tetramer with the small subunits forming a tetrameric 'cap' on each end of the 'barrel' (By similarity).</text>
</comment>
<comment type="similarity">
    <text evidence="2">Belongs to the RuBisCO large chain family. Type I subfamily.</text>
</comment>